<evidence type="ECO:0000250" key="1">
    <source>
        <dbReference type="UniProtKB" id="Q8IYB8"/>
    </source>
</evidence>
<evidence type="ECO:0000250" key="2">
    <source>
        <dbReference type="UniProtKB" id="Q9VN03"/>
    </source>
</evidence>
<evidence type="ECO:0000255" key="3"/>
<evidence type="ECO:0000255" key="4">
    <source>
        <dbReference type="PROSITE-ProRule" id="PRU00541"/>
    </source>
</evidence>
<evidence type="ECO:0000255" key="5">
    <source>
        <dbReference type="PROSITE-ProRule" id="PRU00542"/>
    </source>
</evidence>
<evidence type="ECO:0000256" key="6">
    <source>
        <dbReference type="SAM" id="MobiDB-lite"/>
    </source>
</evidence>
<evidence type="ECO:0000305" key="7"/>
<organism>
    <name type="scientific">Drosophila pseudoobscura pseudoobscura</name>
    <name type="common">Fruit fly</name>
    <dbReference type="NCBI Taxonomy" id="46245"/>
    <lineage>
        <taxon>Eukaryota</taxon>
        <taxon>Metazoa</taxon>
        <taxon>Ecdysozoa</taxon>
        <taxon>Arthropoda</taxon>
        <taxon>Hexapoda</taxon>
        <taxon>Insecta</taxon>
        <taxon>Pterygota</taxon>
        <taxon>Neoptera</taxon>
        <taxon>Endopterygota</taxon>
        <taxon>Diptera</taxon>
        <taxon>Brachycera</taxon>
        <taxon>Muscomorpha</taxon>
        <taxon>Ephydroidea</taxon>
        <taxon>Drosophilidae</taxon>
        <taxon>Drosophila</taxon>
        <taxon>Sophophora</taxon>
    </lineage>
</organism>
<sequence length="762" mass="85932">MQNTRRCISLICVTRQPPSLRATYGAVAAARCLHRAPPQSSRKKHETNVSTLFKPVQVQANVDCEDVGSELVGKLEKSELLKILNKFTQRRETKSLCSENGLDSYLQQQAFGSFRRYCIEAENLPVDLHIIFSDIMQGAGHIDDIFPYFLRHAKTVFPHLDCMDDLKKISDLRQPANWYTNARALTRKIVFHSGPTNSGKTYHAMERYLSAKTGVYCGPLKLLATEVYNKANERGTPCDLVTGEERKFGISDNSPANHVACTVEMTSVNTPYEVAVIDEIQQIRDPQRGWAWTRAFLGLIADEVHVCGEAGALELLQKICETTGETVEVRRYDRLTELTVEDSALGSLDNVMPGDCIVCFSKHDIYTVSREIEARGKEVAVIYGGLPPGTKLAQAAKFNDPANSCKVMVATDAIGMGLNLSIRRIIFYSLVKPTMNERGEREIDTISVSSALQIAGRAGRFRTQWEHGYVTAFKSEDLQTLQRILAQTPEPLKQAGLHPTADQIELYAYHLPNSSLSNLMDIFVNLCTVDDSLYFMCNIEDFKFLAEMIQHVPLPLRARYVFCCAPINRKMPFVCSMFLKIARQYSRNEPITFEFIKSNCGWPFKLPKTILDLVHLESVFDVMDLYRFMDLFPEAGNVREAQKELDEIIQQGVFQITRLLKNTEASQEGETPNYSMRRVTHVKEPRLPSASRGRLTDRLLAQGLLTPGMLSELRKEWDAQQVGQAAAASTSSKESQESPPDDSDDEDSYPGSYKKTRRKRRK</sequence>
<proteinExistence type="inferred from homology"/>
<protein>
    <recommendedName>
        <fullName evidence="2">ATP-dependent RNA helicase SUV3 homolog, mitochondrial</fullName>
        <ecNumber evidence="1">3.6.4.13</ecNumber>
    </recommendedName>
</protein>
<keyword id="KW-0067">ATP-binding</keyword>
<keyword id="KW-0347">Helicase</keyword>
<keyword id="KW-0378">Hydrolase</keyword>
<keyword id="KW-0496">Mitochondrion</keyword>
<keyword id="KW-0547">Nucleotide-binding</keyword>
<keyword id="KW-1185">Reference proteome</keyword>
<keyword id="KW-0809">Transit peptide</keyword>
<feature type="transit peptide" description="Mitochondrion" evidence="3">
    <location>
        <begin position="1"/>
        <end position="36"/>
    </location>
</feature>
<feature type="chain" id="PRO_0000310553" description="ATP-dependent RNA helicase SUV3 homolog, mitochondrial">
    <location>
        <begin position="37"/>
        <end position="762"/>
    </location>
</feature>
<feature type="domain" description="Helicase ATP-binding" evidence="4">
    <location>
        <begin position="181"/>
        <end position="321"/>
    </location>
</feature>
<feature type="domain" description="Helicase C-terminal" evidence="5">
    <location>
        <begin position="331"/>
        <end position="508"/>
    </location>
</feature>
<feature type="region of interest" description="Disordered" evidence="6">
    <location>
        <begin position="716"/>
        <end position="762"/>
    </location>
</feature>
<feature type="compositionally biased region" description="Polar residues" evidence="6">
    <location>
        <begin position="721"/>
        <end position="730"/>
    </location>
</feature>
<feature type="compositionally biased region" description="Acidic residues" evidence="6">
    <location>
        <begin position="739"/>
        <end position="748"/>
    </location>
</feature>
<feature type="binding site" evidence="4">
    <location>
        <begin position="194"/>
        <end position="201"/>
    </location>
    <ligand>
        <name>ATP</name>
        <dbReference type="ChEBI" id="CHEBI:30616"/>
    </ligand>
</feature>
<dbReference type="EC" id="3.6.4.13" evidence="1"/>
<dbReference type="EMBL" id="CM000070">
    <property type="protein sequence ID" value="EAL28766.1"/>
    <property type="molecule type" value="Genomic_DNA"/>
</dbReference>
<dbReference type="SMR" id="Q295E6"/>
<dbReference type="FunCoup" id="Q295E6">
    <property type="interactions" value="1970"/>
</dbReference>
<dbReference type="STRING" id="46245.Q295E6"/>
<dbReference type="eggNOG" id="KOG0953">
    <property type="taxonomic scope" value="Eukaryota"/>
</dbReference>
<dbReference type="HOGENOM" id="CLU_010647_3_2_1"/>
<dbReference type="InParanoid" id="Q295E6"/>
<dbReference type="OMA" id="QPANWYT"/>
<dbReference type="PhylomeDB" id="Q295E6"/>
<dbReference type="Proteomes" id="UP000001819">
    <property type="component" value="Unplaced"/>
</dbReference>
<dbReference type="GO" id="GO:0045025">
    <property type="term" value="C:mitochondrial degradosome"/>
    <property type="evidence" value="ECO:0007669"/>
    <property type="project" value="TreeGrafter"/>
</dbReference>
<dbReference type="GO" id="GO:0005759">
    <property type="term" value="C:mitochondrial matrix"/>
    <property type="evidence" value="ECO:0000250"/>
    <property type="project" value="UniProtKB"/>
</dbReference>
<dbReference type="GO" id="GO:0005524">
    <property type="term" value="F:ATP binding"/>
    <property type="evidence" value="ECO:0007669"/>
    <property type="project" value="UniProtKB-KW"/>
</dbReference>
<dbReference type="GO" id="GO:0016887">
    <property type="term" value="F:ATP hydrolysis activity"/>
    <property type="evidence" value="ECO:0007669"/>
    <property type="project" value="RHEA"/>
</dbReference>
<dbReference type="GO" id="GO:0003677">
    <property type="term" value="F:DNA binding"/>
    <property type="evidence" value="ECO:0000250"/>
    <property type="project" value="UniProtKB"/>
</dbReference>
<dbReference type="GO" id="GO:0003678">
    <property type="term" value="F:DNA helicase activity"/>
    <property type="evidence" value="ECO:0000250"/>
    <property type="project" value="UniProtKB"/>
</dbReference>
<dbReference type="GO" id="GO:0003724">
    <property type="term" value="F:RNA helicase activity"/>
    <property type="evidence" value="ECO:0007669"/>
    <property type="project" value="UniProtKB-EC"/>
</dbReference>
<dbReference type="GO" id="GO:0000965">
    <property type="term" value="P:mitochondrial RNA 3'-end processing"/>
    <property type="evidence" value="ECO:0007669"/>
    <property type="project" value="TreeGrafter"/>
</dbReference>
<dbReference type="CDD" id="cd17913">
    <property type="entry name" value="DEXQc_Suv3"/>
    <property type="match status" value="1"/>
</dbReference>
<dbReference type="CDD" id="cd18805">
    <property type="entry name" value="SF2_C_suv3"/>
    <property type="match status" value="1"/>
</dbReference>
<dbReference type="FunFam" id="1.10.1740.140:FF:000001">
    <property type="entry name" value="ATP-dependent RNA helicase SUPV3L1, mitochondrial"/>
    <property type="match status" value="1"/>
</dbReference>
<dbReference type="FunFam" id="1.20.58.1080:FF:000001">
    <property type="entry name" value="ATP-dependent RNA helicase SUPV3L1, mitochondrial"/>
    <property type="match status" value="1"/>
</dbReference>
<dbReference type="FunFam" id="3.40.50.300:FF:000269">
    <property type="entry name" value="ATP-dependent RNA helicase SUPV3L1, mitochondrial"/>
    <property type="match status" value="1"/>
</dbReference>
<dbReference type="FunFam" id="3.40.50.300:FF:000446">
    <property type="entry name" value="ATP-dependent RNA helicase SUPV3L1, mitochondrial"/>
    <property type="match status" value="1"/>
</dbReference>
<dbReference type="Gene3D" id="1.10.1740.140">
    <property type="match status" value="1"/>
</dbReference>
<dbReference type="Gene3D" id="1.20.272.40">
    <property type="match status" value="1"/>
</dbReference>
<dbReference type="Gene3D" id="1.20.58.1080">
    <property type="match status" value="1"/>
</dbReference>
<dbReference type="Gene3D" id="3.40.50.300">
    <property type="entry name" value="P-loop containing nucleotide triphosphate hydrolases"/>
    <property type="match status" value="2"/>
</dbReference>
<dbReference type="InterPro" id="IPR055206">
    <property type="entry name" value="DEXQc_SUV3"/>
</dbReference>
<dbReference type="InterPro" id="IPR001650">
    <property type="entry name" value="Helicase_C-like"/>
</dbReference>
<dbReference type="InterPro" id="IPR027417">
    <property type="entry name" value="P-loop_NTPase"/>
</dbReference>
<dbReference type="InterPro" id="IPR050699">
    <property type="entry name" value="RNA-DNA_Helicase"/>
</dbReference>
<dbReference type="InterPro" id="IPR041082">
    <property type="entry name" value="Suv3_C_1"/>
</dbReference>
<dbReference type="InterPro" id="IPR044774">
    <property type="entry name" value="Suv3_DEXQc"/>
</dbReference>
<dbReference type="InterPro" id="IPR041453">
    <property type="entry name" value="Suv3_N"/>
</dbReference>
<dbReference type="PANTHER" id="PTHR12131">
    <property type="entry name" value="ATP-DEPENDENT RNA AND DNA HELICASE"/>
    <property type="match status" value="1"/>
</dbReference>
<dbReference type="PANTHER" id="PTHR12131:SF1">
    <property type="entry name" value="ATP-DEPENDENT RNA HELICASE SUPV3L1, MITOCHONDRIAL-RELATED"/>
    <property type="match status" value="1"/>
</dbReference>
<dbReference type="Pfam" id="PF22527">
    <property type="entry name" value="DEXQc_Suv3"/>
    <property type="match status" value="1"/>
</dbReference>
<dbReference type="Pfam" id="PF00271">
    <property type="entry name" value="Helicase_C"/>
    <property type="match status" value="1"/>
</dbReference>
<dbReference type="Pfam" id="PF18147">
    <property type="entry name" value="Suv3_C_1"/>
    <property type="match status" value="1"/>
</dbReference>
<dbReference type="Pfam" id="PF18114">
    <property type="entry name" value="Suv3_N"/>
    <property type="match status" value="1"/>
</dbReference>
<dbReference type="SMART" id="SM00490">
    <property type="entry name" value="HELICc"/>
    <property type="match status" value="1"/>
</dbReference>
<dbReference type="SUPFAM" id="SSF52540">
    <property type="entry name" value="P-loop containing nucleoside triphosphate hydrolases"/>
    <property type="match status" value="2"/>
</dbReference>
<dbReference type="PROSITE" id="PS51192">
    <property type="entry name" value="HELICASE_ATP_BIND_1"/>
    <property type="match status" value="1"/>
</dbReference>
<dbReference type="PROSITE" id="PS51194">
    <property type="entry name" value="HELICASE_CTER"/>
    <property type="match status" value="1"/>
</dbReference>
<gene>
    <name type="ORF">GA22038</name>
</gene>
<reference key="1">
    <citation type="journal article" date="2005" name="Genome Res.">
        <title>Comparative genome sequencing of Drosophila pseudoobscura: chromosomal, gene, and cis-element evolution.</title>
        <authorList>
            <person name="Richards S."/>
            <person name="Liu Y."/>
            <person name="Bettencourt B.R."/>
            <person name="Hradecky P."/>
            <person name="Letovsky S."/>
            <person name="Nielsen R."/>
            <person name="Thornton K."/>
            <person name="Hubisz M.J."/>
            <person name="Chen R."/>
            <person name="Meisel R.P."/>
            <person name="Couronne O."/>
            <person name="Hua S."/>
            <person name="Smith M.A."/>
            <person name="Zhang P."/>
            <person name="Liu J."/>
            <person name="Bussemaker H.J."/>
            <person name="van Batenburg M.F."/>
            <person name="Howells S.L."/>
            <person name="Scherer S.E."/>
            <person name="Sodergren E."/>
            <person name="Matthews B.B."/>
            <person name="Crosby M.A."/>
            <person name="Schroeder A.J."/>
            <person name="Ortiz-Barrientos D."/>
            <person name="Rives C.M."/>
            <person name="Metzker M.L."/>
            <person name="Muzny D.M."/>
            <person name="Scott G."/>
            <person name="Steffen D."/>
            <person name="Wheeler D.A."/>
            <person name="Worley K.C."/>
            <person name="Havlak P."/>
            <person name="Durbin K.J."/>
            <person name="Egan A."/>
            <person name="Gill R."/>
            <person name="Hume J."/>
            <person name="Morgan M.B."/>
            <person name="Miner G."/>
            <person name="Hamilton C."/>
            <person name="Huang Y."/>
            <person name="Waldron L."/>
            <person name="Verduzco D."/>
            <person name="Clerc-Blankenburg K.P."/>
            <person name="Dubchak I."/>
            <person name="Noor M.A.F."/>
            <person name="Anderson W."/>
            <person name="White K.P."/>
            <person name="Clark A.G."/>
            <person name="Schaeffer S.W."/>
            <person name="Gelbart W.M."/>
            <person name="Weinstock G.M."/>
            <person name="Gibbs R.A."/>
        </authorList>
    </citation>
    <scope>NUCLEOTIDE SEQUENCE [LARGE SCALE GENOMIC DNA]</scope>
    <source>
        <strain>MV2-25 / Tucson 14011-0121.94</strain>
    </source>
</reference>
<comment type="function">
    <text evidence="1 2">Major helicase player in mitochondrial RNA metabolism and maintenance. Likely component of the mitochondrial degradosome (mtEXO) complex, that degrades 3' overhang double-stranded RNA with a 3'-to-5' directionality in an ATP-dependent manner. ATPase and ATP-dependent multisubstrate helicase, able to unwind double-stranded (ds) DNA and RNA, and RNA/DNA heteroduplexes in the 5'-to-3' direction. Regulates mRNA stability and is required for the correct processing and maturation of mitochondrial transcripts.</text>
</comment>
<comment type="catalytic activity">
    <reaction evidence="1">
        <text>ATP + H2O = ADP + phosphate + H(+)</text>
        <dbReference type="Rhea" id="RHEA:13065"/>
        <dbReference type="ChEBI" id="CHEBI:15377"/>
        <dbReference type="ChEBI" id="CHEBI:15378"/>
        <dbReference type="ChEBI" id="CHEBI:30616"/>
        <dbReference type="ChEBI" id="CHEBI:43474"/>
        <dbReference type="ChEBI" id="CHEBI:456216"/>
        <dbReference type="EC" id="3.6.4.13"/>
    </reaction>
</comment>
<comment type="cofactor">
    <cofactor evidence="1">
        <name>Mg(2+)</name>
        <dbReference type="ChEBI" id="CHEBI:18420"/>
    </cofactor>
    <cofactor evidence="1">
        <name>Mn(2+)</name>
        <dbReference type="ChEBI" id="CHEBI:29035"/>
    </cofactor>
</comment>
<comment type="subcellular location">
    <subcellularLocation>
        <location evidence="2">Mitochondrion</location>
    </subcellularLocation>
    <text evidence="2">Unlike in mammals, does not localize to the nucleus.</text>
</comment>
<comment type="similarity">
    <text evidence="7">Belongs to the helicase family.</text>
</comment>
<accession>Q295E6</accession>
<name>SUV3_DROPS</name>